<proteinExistence type="evidence at protein level"/>
<feature type="chain" id="PRO_0000085937" description="Dual specificity tyrosine-phosphorylation-regulated kinase 2">
    <location>
        <begin position="1"/>
        <end position="722"/>
    </location>
</feature>
<feature type="domain" description="Protein kinase" evidence="2 9">
    <location>
        <begin position="198"/>
        <end position="494"/>
    </location>
</feature>
<feature type="region of interest" description="Disordered" evidence="4">
    <location>
        <begin position="54"/>
        <end position="127"/>
    </location>
</feature>
<feature type="region of interest" description="Disordered" evidence="4">
    <location>
        <begin position="494"/>
        <end position="519"/>
    </location>
</feature>
<feature type="region of interest" description="Disordered" evidence="4">
    <location>
        <begin position="557"/>
        <end position="582"/>
    </location>
</feature>
<feature type="region of interest" description="Disordered" evidence="4">
    <location>
        <begin position="624"/>
        <end position="643"/>
    </location>
</feature>
<feature type="region of interest" description="Disordered" evidence="4">
    <location>
        <begin position="679"/>
        <end position="722"/>
    </location>
</feature>
<feature type="compositionally biased region" description="Low complexity" evidence="4">
    <location>
        <begin position="66"/>
        <end position="119"/>
    </location>
</feature>
<feature type="compositionally biased region" description="Low complexity" evidence="4">
    <location>
        <begin position="506"/>
        <end position="519"/>
    </location>
</feature>
<feature type="compositionally biased region" description="Polar residues" evidence="4">
    <location>
        <begin position="557"/>
        <end position="576"/>
    </location>
</feature>
<feature type="compositionally biased region" description="Low complexity" evidence="4">
    <location>
        <begin position="626"/>
        <end position="635"/>
    </location>
</feature>
<feature type="compositionally biased region" description="Low complexity" evidence="4">
    <location>
        <begin position="689"/>
        <end position="707"/>
    </location>
</feature>
<feature type="active site" description="Proton acceptor" evidence="1 2 3">
    <location>
        <position position="324"/>
    </location>
</feature>
<feature type="binding site" evidence="1 2">
    <location>
        <begin position="204"/>
        <end position="212"/>
    </location>
    <ligand>
        <name>ATP</name>
        <dbReference type="ChEBI" id="CHEBI:30616"/>
    </ligand>
</feature>
<feature type="binding site" evidence="1 2">
    <location>
        <position position="227"/>
    </location>
    <ligand>
        <name>ATP</name>
        <dbReference type="ChEBI" id="CHEBI:30616"/>
    </ligand>
</feature>
<feature type="modified residue" description="Phosphoserine" evidence="8">
    <location>
        <position position="25"/>
    </location>
</feature>
<feature type="modified residue" description="Phosphotyrosine; by autocatalysis" evidence="7">
    <location>
        <position position="356"/>
    </location>
</feature>
<feature type="modified residue" description="Phosphotyrosine; by autocatalysis" evidence="7">
    <location>
        <position position="358"/>
    </location>
</feature>
<feature type="mutagenesis site" description="Blocks tyrosine phosphorylation." evidence="7">
    <original>Y</original>
    <variation>D</variation>
    <variation>F</variation>
    <location>
        <position position="356"/>
    </location>
</feature>
<feature type="mutagenesis site" description="Blocks tyrosine phosphorylation." evidence="7">
    <original>Y</original>
    <variation>D</variation>
    <variation>F</variation>
    <location>
        <position position="358"/>
    </location>
</feature>
<evidence type="ECO:0000250" key="1">
    <source>
        <dbReference type="UniProtKB" id="Q92630"/>
    </source>
</evidence>
<evidence type="ECO:0000255" key="2">
    <source>
        <dbReference type="PROSITE-ProRule" id="PRU00159"/>
    </source>
</evidence>
<evidence type="ECO:0000255" key="3">
    <source>
        <dbReference type="PROSITE-ProRule" id="PRU10027"/>
    </source>
</evidence>
<evidence type="ECO:0000256" key="4">
    <source>
        <dbReference type="SAM" id="MobiDB-lite"/>
    </source>
</evidence>
<evidence type="ECO:0000269" key="5">
    <source>
    </source>
</evidence>
<evidence type="ECO:0000269" key="6">
    <source>
    </source>
</evidence>
<evidence type="ECO:0000269" key="7">
    <source>
    </source>
</evidence>
<evidence type="ECO:0000269" key="8">
    <source>
    </source>
</evidence>
<evidence type="ECO:0000305" key="9"/>
<evidence type="ECO:0000312" key="10">
    <source>
        <dbReference type="EMBL" id="AAQ22557.1"/>
    </source>
</evidence>
<evidence type="ECO:0000312" key="11">
    <source>
        <dbReference type="FlyBase" id="FBgn0016930"/>
    </source>
</evidence>
<comment type="function">
    <text evidence="7">In vitro; can phosphorylate exogenous substrates on Ser and Thr residues. May have a physiological role in development being involved in cellular growth and differentiation.</text>
</comment>
<comment type="catalytic activity">
    <reaction evidence="7">
        <text>L-seryl-[protein] + ATP = O-phospho-L-seryl-[protein] + ADP + H(+)</text>
        <dbReference type="Rhea" id="RHEA:17989"/>
        <dbReference type="Rhea" id="RHEA-COMP:9863"/>
        <dbReference type="Rhea" id="RHEA-COMP:11604"/>
        <dbReference type="ChEBI" id="CHEBI:15378"/>
        <dbReference type="ChEBI" id="CHEBI:29999"/>
        <dbReference type="ChEBI" id="CHEBI:30616"/>
        <dbReference type="ChEBI" id="CHEBI:83421"/>
        <dbReference type="ChEBI" id="CHEBI:456216"/>
        <dbReference type="EC" id="2.7.12.1"/>
    </reaction>
</comment>
<comment type="catalytic activity">
    <reaction evidence="7">
        <text>L-threonyl-[protein] + ATP = O-phospho-L-threonyl-[protein] + ADP + H(+)</text>
        <dbReference type="Rhea" id="RHEA:46608"/>
        <dbReference type="Rhea" id="RHEA-COMP:11060"/>
        <dbReference type="Rhea" id="RHEA-COMP:11605"/>
        <dbReference type="ChEBI" id="CHEBI:15378"/>
        <dbReference type="ChEBI" id="CHEBI:30013"/>
        <dbReference type="ChEBI" id="CHEBI:30616"/>
        <dbReference type="ChEBI" id="CHEBI:61977"/>
        <dbReference type="ChEBI" id="CHEBI:456216"/>
        <dbReference type="EC" id="2.7.12.1"/>
    </reaction>
</comment>
<comment type="catalytic activity">
    <reaction evidence="7">
        <text>L-tyrosyl-[protein] + ATP = O-phospho-L-tyrosyl-[protein] + ADP + H(+)</text>
        <dbReference type="Rhea" id="RHEA:10596"/>
        <dbReference type="Rhea" id="RHEA-COMP:10136"/>
        <dbReference type="Rhea" id="RHEA-COMP:20101"/>
        <dbReference type="ChEBI" id="CHEBI:15378"/>
        <dbReference type="ChEBI" id="CHEBI:30616"/>
        <dbReference type="ChEBI" id="CHEBI:46858"/>
        <dbReference type="ChEBI" id="CHEBI:61978"/>
        <dbReference type="ChEBI" id="CHEBI:456216"/>
        <dbReference type="EC" id="2.7.12.1"/>
    </reaction>
</comment>
<comment type="cofactor">
    <cofactor evidence="7">
        <name>Mg(2+)</name>
        <dbReference type="ChEBI" id="CHEBI:18420"/>
    </cofactor>
</comment>
<comment type="activity regulation">
    <text evidence="7">Autophosphorylates on Tyr-356 and Tyr-358.</text>
</comment>
<comment type="subcellular location">
    <subcellularLocation>
        <location evidence="7">Cytoplasm</location>
    </subcellularLocation>
</comment>
<comment type="developmental stage">
    <text evidence="7">Highly expressed and active during embryogenesis and pupation and at lower levels in larva and adult.</text>
</comment>
<comment type="PTM">
    <text evidence="7 8">Phosphorylated on serine/threonine residues.</text>
</comment>
<comment type="similarity">
    <text evidence="9">Belongs to the protein kinase superfamily. CMGC Ser/Thr protein kinase family. MNB/DYRK subfamily.</text>
</comment>
<comment type="sequence caution" evidence="9">
    <conflict type="miscellaneous discrepancy">
        <sequence resource="EMBL-CDS" id="AAL39328"/>
    </conflict>
    <text>Deletion within an exon that does not correspond to an intron.</text>
</comment>
<gene>
    <name evidence="11" type="primary">Dyrk2</name>
    <name evidence="11" type="synonym">smi35A</name>
    <name evidence="11" type="ORF">CG4551</name>
</gene>
<sequence>MLDRCEMPIQLDNEKLRRDVRLSGSRLDLPQLCNGSRRLDGHNNHVAANENTVTTTSLNGNGNGNGNSNSNNNNNIGSPVSSSTTNSSNGGNERGSSTKSNSSSGSGSSGNSASSTGSGELKCNTPMTPSELVKKFRNYLTDLEFEELKVYKEVWYFGQHASKNYNKPAPTANTTNLGYDDDNGNYKIIEHDHIAFRYEILEVIGKGSFGQVIRALDHKTNTHVAIKIIRNKKRFLNQAVVELNILDELREKDADGSHNVIHMLDYTYFRKHLCITFELMSLNLYELIKKNNYNGFSMSLIRRFCNSIVKCLRLLYKENIIHCDLKPENILLKQRGSSSIKVIDFGSSCYVDRKIYTYIQSRFYRSPEVILGLQYGTAIDMWSLGCILAELYTGFPLFPGENEVEQLACIMEVLGLPPKVLISVARRRRLFFDSRDAPRCITNTKGRKRSPGSKSLAHILHCQDRYFIDFLQRCLEWDPAERMTPDEAAHHEFLQPSASSRHRSCRMSSSSSSSGLNSVSQKSSCYSFSEISPGTNGPVVASITSTTAVHNAAIATTTKSRQQPPSQSHGHAQSNGHLPDIKLSASDKYNSMQKVAVRSKITSSVSDLESVQQYSLHRIYGGVGSGSTHHVSSAATRKHLPGTGSGIVGAMSSKYGSSTLAHNHHNVTHHNASTATIATTTHHHHHHGGQQQQQSSSGASTMAMSHSQSTGDVSDRAIFGRA</sequence>
<dbReference type="EC" id="2.7.12.1" evidence="7"/>
<dbReference type="EMBL" id="AF168467">
    <property type="protein sequence ID" value="AAD47290.1"/>
    <property type="molecule type" value="mRNA"/>
</dbReference>
<dbReference type="EMBL" id="AE014134">
    <property type="protein sequence ID" value="AAF53380.1"/>
    <property type="molecule type" value="Genomic_DNA"/>
</dbReference>
<dbReference type="EMBL" id="AE014134">
    <property type="protein sequence ID" value="AAS64705.1"/>
    <property type="molecule type" value="Genomic_DNA"/>
</dbReference>
<dbReference type="EMBL" id="AE014134">
    <property type="protein sequence ID" value="AAS64706.1"/>
    <property type="molecule type" value="Genomic_DNA"/>
</dbReference>
<dbReference type="EMBL" id="AE014134">
    <property type="protein sequence ID" value="ABC65900.1"/>
    <property type="molecule type" value="Genomic_DNA"/>
</dbReference>
<dbReference type="EMBL" id="AE014134">
    <property type="protein sequence ID" value="ABC65901.1"/>
    <property type="molecule type" value="Genomic_DNA"/>
</dbReference>
<dbReference type="EMBL" id="BT010088">
    <property type="protein sequence ID" value="AAQ22557.1"/>
    <property type="molecule type" value="mRNA"/>
</dbReference>
<dbReference type="EMBL" id="AY069183">
    <property type="protein sequence ID" value="AAL39328.1"/>
    <property type="status" value="ALT_SEQ"/>
    <property type="molecule type" value="mRNA"/>
</dbReference>
<dbReference type="RefSeq" id="NP_001033906.1">
    <property type="nucleotide sequence ID" value="NM_001038817.1"/>
</dbReference>
<dbReference type="RefSeq" id="NP_001033907.1">
    <property type="nucleotide sequence ID" value="NM_001038818.1"/>
</dbReference>
<dbReference type="RefSeq" id="NP_523564.1">
    <property type="nucleotide sequence ID" value="NM_078840.5"/>
</dbReference>
<dbReference type="RefSeq" id="NP_995710.1">
    <property type="nucleotide sequence ID" value="NM_205988.3"/>
</dbReference>
<dbReference type="RefSeq" id="NP_995711.1">
    <property type="nucleotide sequence ID" value="NM_205989.3"/>
</dbReference>
<dbReference type="SMR" id="Q9V3D5"/>
<dbReference type="BioGRID" id="60857">
    <property type="interactions" value="3"/>
</dbReference>
<dbReference type="FunCoup" id="Q9V3D5">
    <property type="interactions" value="439"/>
</dbReference>
<dbReference type="IntAct" id="Q9V3D5">
    <property type="interactions" value="14"/>
</dbReference>
<dbReference type="STRING" id="7227.FBpp0307879"/>
<dbReference type="iPTMnet" id="Q9V3D5"/>
<dbReference type="PaxDb" id="7227-FBpp0088344"/>
<dbReference type="DNASU" id="34831"/>
<dbReference type="EnsemblMetazoa" id="FBtr0089288">
    <property type="protein sequence ID" value="FBpp0088344"/>
    <property type="gene ID" value="FBgn0016930"/>
</dbReference>
<dbReference type="EnsemblMetazoa" id="FBtr0089289">
    <property type="protein sequence ID" value="FBpp0089218"/>
    <property type="gene ID" value="FBgn0016930"/>
</dbReference>
<dbReference type="EnsemblMetazoa" id="FBtr0089290">
    <property type="protein sequence ID" value="FBpp0089219"/>
    <property type="gene ID" value="FBgn0016930"/>
</dbReference>
<dbReference type="EnsemblMetazoa" id="FBtr0100447">
    <property type="protein sequence ID" value="FBpp0099869"/>
    <property type="gene ID" value="FBgn0016930"/>
</dbReference>
<dbReference type="EnsemblMetazoa" id="FBtr0100448">
    <property type="protein sequence ID" value="FBpp0099870"/>
    <property type="gene ID" value="FBgn0016930"/>
</dbReference>
<dbReference type="GeneID" id="34831"/>
<dbReference type="KEGG" id="dme:Dmel_CG4551"/>
<dbReference type="AGR" id="FB:FBgn0016930"/>
<dbReference type="CTD" id="8445"/>
<dbReference type="FlyBase" id="FBgn0016930">
    <property type="gene designation" value="Dyrk2"/>
</dbReference>
<dbReference type="VEuPathDB" id="VectorBase:FBgn0016930"/>
<dbReference type="eggNOG" id="KOG0667">
    <property type="taxonomic scope" value="Eukaryota"/>
</dbReference>
<dbReference type="GeneTree" id="ENSGT00940000159401"/>
<dbReference type="HOGENOM" id="CLU_000288_5_13_1"/>
<dbReference type="InParanoid" id="Q9V3D5"/>
<dbReference type="OrthoDB" id="9332038at2759"/>
<dbReference type="PhylomeDB" id="Q9V3D5"/>
<dbReference type="SignaLink" id="Q9V3D5"/>
<dbReference type="BioGRID-ORCS" id="34831">
    <property type="hits" value="0 hits in 3 CRISPR screens"/>
</dbReference>
<dbReference type="ChiTaRS" id="Dyrk2">
    <property type="organism name" value="fly"/>
</dbReference>
<dbReference type="GenomeRNAi" id="34831"/>
<dbReference type="PRO" id="PR:Q9V3D5"/>
<dbReference type="Proteomes" id="UP000000803">
    <property type="component" value="Chromosome 2L"/>
</dbReference>
<dbReference type="Bgee" id="FBgn0016930">
    <property type="expression patterns" value="Expressed in dorsal appendage forming follicle cell in ovary and 251 other cell types or tissues"/>
</dbReference>
<dbReference type="ExpressionAtlas" id="Q9V3D5">
    <property type="expression patterns" value="baseline and differential"/>
</dbReference>
<dbReference type="GO" id="GO:0005737">
    <property type="term" value="C:cytoplasm"/>
    <property type="evidence" value="ECO:0000318"/>
    <property type="project" value="GO_Central"/>
</dbReference>
<dbReference type="GO" id="GO:0005856">
    <property type="term" value="C:cytoskeleton"/>
    <property type="evidence" value="ECO:0000318"/>
    <property type="project" value="GO_Central"/>
</dbReference>
<dbReference type="GO" id="GO:0005829">
    <property type="term" value="C:cytosol"/>
    <property type="evidence" value="ECO:0000314"/>
    <property type="project" value="UniProtKB"/>
</dbReference>
<dbReference type="GO" id="GO:0005634">
    <property type="term" value="C:nucleus"/>
    <property type="evidence" value="ECO:0000318"/>
    <property type="project" value="GO_Central"/>
</dbReference>
<dbReference type="GO" id="GO:0005524">
    <property type="term" value="F:ATP binding"/>
    <property type="evidence" value="ECO:0000314"/>
    <property type="project" value="UniProtKB"/>
</dbReference>
<dbReference type="GO" id="GO:0106310">
    <property type="term" value="F:protein serine kinase activity"/>
    <property type="evidence" value="ECO:0007669"/>
    <property type="project" value="RHEA"/>
</dbReference>
<dbReference type="GO" id="GO:0004674">
    <property type="term" value="F:protein serine/threonine kinase activity"/>
    <property type="evidence" value="ECO:0000318"/>
    <property type="project" value="GO_Central"/>
</dbReference>
<dbReference type="GO" id="GO:0004712">
    <property type="term" value="F:protein serine/threonine/tyrosine kinase activity"/>
    <property type="evidence" value="ECO:0000314"/>
    <property type="project" value="UniProtKB"/>
</dbReference>
<dbReference type="GO" id="GO:0004713">
    <property type="term" value="F:protein tyrosine kinase activity"/>
    <property type="evidence" value="ECO:0007669"/>
    <property type="project" value="UniProtKB-KW"/>
</dbReference>
<dbReference type="GO" id="GO:0042048">
    <property type="term" value="P:olfactory behavior"/>
    <property type="evidence" value="ECO:0000315"/>
    <property type="project" value="FlyBase"/>
</dbReference>
<dbReference type="GO" id="GO:0030177">
    <property type="term" value="P:positive regulation of Wnt signaling pathway"/>
    <property type="evidence" value="ECO:0000315"/>
    <property type="project" value="FlyBase"/>
</dbReference>
<dbReference type="GO" id="GO:0009416">
    <property type="term" value="P:response to light stimulus"/>
    <property type="evidence" value="ECO:0000315"/>
    <property type="project" value="FlyBase"/>
</dbReference>
<dbReference type="GO" id="GO:0007608">
    <property type="term" value="P:sensory perception of smell"/>
    <property type="evidence" value="ECO:0000315"/>
    <property type="project" value="FlyBase"/>
</dbReference>
<dbReference type="CDD" id="cd14225">
    <property type="entry name" value="PKc_DYRK4"/>
    <property type="match status" value="1"/>
</dbReference>
<dbReference type="FunFam" id="3.30.10.30:FF:000004">
    <property type="entry name" value="dual specificity tyrosine-phosphorylation-regulated kinase 2"/>
    <property type="match status" value="1"/>
</dbReference>
<dbReference type="FunFam" id="1.10.510.10:FF:000112">
    <property type="entry name" value="Putative dual specificity tyrosine-phosphorylation-regulated kinase 2"/>
    <property type="match status" value="1"/>
</dbReference>
<dbReference type="FunFam" id="3.30.200.20:FF:000127">
    <property type="entry name" value="Putative dual specificity tyrosine-phosphorylation-regulated kinase 2"/>
    <property type="match status" value="1"/>
</dbReference>
<dbReference type="Gene3D" id="3.30.10.30">
    <property type="entry name" value="DYRK"/>
    <property type="match status" value="1"/>
</dbReference>
<dbReference type="Gene3D" id="3.30.200.20">
    <property type="entry name" value="Phosphorylase Kinase, domain 1"/>
    <property type="match status" value="1"/>
</dbReference>
<dbReference type="Gene3D" id="1.10.510.10">
    <property type="entry name" value="Transferase(Phosphotransferase) domain 1"/>
    <property type="match status" value="1"/>
</dbReference>
<dbReference type="InterPro" id="IPR042521">
    <property type="entry name" value="DYRK"/>
</dbReference>
<dbReference type="InterPro" id="IPR011009">
    <property type="entry name" value="Kinase-like_dom_sf"/>
</dbReference>
<dbReference type="InterPro" id="IPR000719">
    <property type="entry name" value="Prot_kinase_dom"/>
</dbReference>
<dbReference type="InterPro" id="IPR017441">
    <property type="entry name" value="Protein_kinase_ATP_BS"/>
</dbReference>
<dbReference type="InterPro" id="IPR008271">
    <property type="entry name" value="Ser/Thr_kinase_AS"/>
</dbReference>
<dbReference type="InterPro" id="IPR050494">
    <property type="entry name" value="Ser_Thr_dual-spec_kinase"/>
</dbReference>
<dbReference type="PANTHER" id="PTHR24058">
    <property type="entry name" value="DUAL SPECIFICITY PROTEIN KINASE"/>
    <property type="match status" value="1"/>
</dbReference>
<dbReference type="PANTHER" id="PTHR24058:SF22">
    <property type="entry name" value="DUAL SPECIFICITY TYROSINE-PHOSPHORYLATION-REGULATED KINASE 4"/>
    <property type="match status" value="1"/>
</dbReference>
<dbReference type="Pfam" id="PF00069">
    <property type="entry name" value="Pkinase"/>
    <property type="match status" value="1"/>
</dbReference>
<dbReference type="SMART" id="SM00220">
    <property type="entry name" value="S_TKc"/>
    <property type="match status" value="1"/>
</dbReference>
<dbReference type="SUPFAM" id="SSF56112">
    <property type="entry name" value="Protein kinase-like (PK-like)"/>
    <property type="match status" value="1"/>
</dbReference>
<dbReference type="PROSITE" id="PS00107">
    <property type="entry name" value="PROTEIN_KINASE_ATP"/>
    <property type="match status" value="1"/>
</dbReference>
<dbReference type="PROSITE" id="PS50011">
    <property type="entry name" value="PROTEIN_KINASE_DOM"/>
    <property type="match status" value="1"/>
</dbReference>
<dbReference type="PROSITE" id="PS00108">
    <property type="entry name" value="PROTEIN_KINASE_ST"/>
    <property type="match status" value="1"/>
</dbReference>
<reference evidence="9" key="1">
    <citation type="journal article" date="2003" name="Biochem. J.">
        <title>dDYRK2: a novel dual-specificity tyrosine-phosphorylation-regulated kinase in Drosophila.</title>
        <authorList>
            <person name="Lochhead P.A."/>
            <person name="Sibbet G."/>
            <person name="Kinstrie R."/>
            <person name="Cleghon T."/>
            <person name="Rylatt M."/>
            <person name="Morrison D.K."/>
            <person name="Cleghon V."/>
        </authorList>
    </citation>
    <scope>NUCLEOTIDE SEQUENCE [MRNA]</scope>
    <scope>FUNCTION</scope>
    <scope>COFACTOR</scope>
    <scope>ACTIVITY REGULATION</scope>
    <scope>SUBCELLULAR LOCATION</scope>
    <scope>DEVELOPMENTAL STAGE</scope>
    <scope>PHOSPHORYLATION AT TYR-356 AND TYR-358</scope>
    <scope>MUTAGENESIS OF TYR-356 AND TYR-358</scope>
    <source>
        <strain evidence="7">Oregon-R</strain>
        <tissue evidence="7">Embryo</tissue>
    </source>
</reference>
<reference evidence="9" key="2">
    <citation type="journal article" date="1999" name="Genetics">
        <title>An exploration of the sequence of a 2.9-Mb region of the genome of Drosophila melanogaster: the Adh region.</title>
        <authorList>
            <person name="Ashburner M."/>
            <person name="Misra S."/>
            <person name="Roote J."/>
            <person name="Lewis S.E."/>
            <person name="Blazej R.G."/>
            <person name="Davis T."/>
            <person name="Doyle C."/>
            <person name="Galle R.F."/>
            <person name="George R.A."/>
            <person name="Harris N.L."/>
            <person name="Hartzell G."/>
            <person name="Harvey D.A."/>
            <person name="Hong L."/>
            <person name="Houston K.A."/>
            <person name="Hoskins R.A."/>
            <person name="Johnson G."/>
            <person name="Martin C."/>
            <person name="Moshrefi A.R."/>
            <person name="Palazzolo M."/>
            <person name="Reese M.G."/>
            <person name="Spradling A.C."/>
            <person name="Tsang G."/>
            <person name="Wan K.H."/>
            <person name="Whitelaw K."/>
            <person name="Celniker S.E."/>
            <person name="Rubin G.M."/>
        </authorList>
    </citation>
    <scope>NUCLEOTIDE SEQUENCE [LARGE SCALE GENOMIC DNA]</scope>
    <source>
        <strain evidence="5">Berkeley</strain>
    </source>
</reference>
<reference evidence="9" key="3">
    <citation type="journal article" date="2000" name="Science">
        <title>The genome sequence of Drosophila melanogaster.</title>
        <authorList>
            <person name="Adams M.D."/>
            <person name="Celniker S.E."/>
            <person name="Holt R.A."/>
            <person name="Evans C.A."/>
            <person name="Gocayne J.D."/>
            <person name="Amanatides P.G."/>
            <person name="Scherer S.E."/>
            <person name="Li P.W."/>
            <person name="Hoskins R.A."/>
            <person name="Galle R.F."/>
            <person name="George R.A."/>
            <person name="Lewis S.E."/>
            <person name="Richards S."/>
            <person name="Ashburner M."/>
            <person name="Henderson S.N."/>
            <person name="Sutton G.G."/>
            <person name="Wortman J.R."/>
            <person name="Yandell M.D."/>
            <person name="Zhang Q."/>
            <person name="Chen L.X."/>
            <person name="Brandon R.C."/>
            <person name="Rogers Y.-H.C."/>
            <person name="Blazej R.G."/>
            <person name="Champe M."/>
            <person name="Pfeiffer B.D."/>
            <person name="Wan K.H."/>
            <person name="Doyle C."/>
            <person name="Baxter E.G."/>
            <person name="Helt G."/>
            <person name="Nelson C.R."/>
            <person name="Miklos G.L.G."/>
            <person name="Abril J.F."/>
            <person name="Agbayani A."/>
            <person name="An H.-J."/>
            <person name="Andrews-Pfannkoch C."/>
            <person name="Baldwin D."/>
            <person name="Ballew R.M."/>
            <person name="Basu A."/>
            <person name="Baxendale J."/>
            <person name="Bayraktaroglu L."/>
            <person name="Beasley E.M."/>
            <person name="Beeson K.Y."/>
            <person name="Benos P.V."/>
            <person name="Berman B.P."/>
            <person name="Bhandari D."/>
            <person name="Bolshakov S."/>
            <person name="Borkova D."/>
            <person name="Botchan M.R."/>
            <person name="Bouck J."/>
            <person name="Brokstein P."/>
            <person name="Brottier P."/>
            <person name="Burtis K.C."/>
            <person name="Busam D.A."/>
            <person name="Butler H."/>
            <person name="Cadieu E."/>
            <person name="Center A."/>
            <person name="Chandra I."/>
            <person name="Cherry J.M."/>
            <person name="Cawley S."/>
            <person name="Dahlke C."/>
            <person name="Davenport L.B."/>
            <person name="Davies P."/>
            <person name="de Pablos B."/>
            <person name="Delcher A."/>
            <person name="Deng Z."/>
            <person name="Mays A.D."/>
            <person name="Dew I."/>
            <person name="Dietz S.M."/>
            <person name="Dodson K."/>
            <person name="Doup L.E."/>
            <person name="Downes M."/>
            <person name="Dugan-Rocha S."/>
            <person name="Dunkov B.C."/>
            <person name="Dunn P."/>
            <person name="Durbin K.J."/>
            <person name="Evangelista C.C."/>
            <person name="Ferraz C."/>
            <person name="Ferriera S."/>
            <person name="Fleischmann W."/>
            <person name="Fosler C."/>
            <person name="Gabrielian A.E."/>
            <person name="Garg N.S."/>
            <person name="Gelbart W.M."/>
            <person name="Glasser K."/>
            <person name="Glodek A."/>
            <person name="Gong F."/>
            <person name="Gorrell J.H."/>
            <person name="Gu Z."/>
            <person name="Guan P."/>
            <person name="Harris M."/>
            <person name="Harris N.L."/>
            <person name="Harvey D.A."/>
            <person name="Heiman T.J."/>
            <person name="Hernandez J.R."/>
            <person name="Houck J."/>
            <person name="Hostin D."/>
            <person name="Houston K.A."/>
            <person name="Howland T.J."/>
            <person name="Wei M.-H."/>
            <person name="Ibegwam C."/>
            <person name="Jalali M."/>
            <person name="Kalush F."/>
            <person name="Karpen G.H."/>
            <person name="Ke Z."/>
            <person name="Kennison J.A."/>
            <person name="Ketchum K.A."/>
            <person name="Kimmel B.E."/>
            <person name="Kodira C.D."/>
            <person name="Kraft C.L."/>
            <person name="Kravitz S."/>
            <person name="Kulp D."/>
            <person name="Lai Z."/>
            <person name="Lasko P."/>
            <person name="Lei Y."/>
            <person name="Levitsky A.A."/>
            <person name="Li J.H."/>
            <person name="Li Z."/>
            <person name="Liang Y."/>
            <person name="Lin X."/>
            <person name="Liu X."/>
            <person name="Mattei B."/>
            <person name="McIntosh T.C."/>
            <person name="McLeod M.P."/>
            <person name="McPherson D."/>
            <person name="Merkulov G."/>
            <person name="Milshina N.V."/>
            <person name="Mobarry C."/>
            <person name="Morris J."/>
            <person name="Moshrefi A."/>
            <person name="Mount S.M."/>
            <person name="Moy M."/>
            <person name="Murphy B."/>
            <person name="Murphy L."/>
            <person name="Muzny D.M."/>
            <person name="Nelson D.L."/>
            <person name="Nelson D.R."/>
            <person name="Nelson K.A."/>
            <person name="Nixon K."/>
            <person name="Nusskern D.R."/>
            <person name="Pacleb J.M."/>
            <person name="Palazzolo M."/>
            <person name="Pittman G.S."/>
            <person name="Pan S."/>
            <person name="Pollard J."/>
            <person name="Puri V."/>
            <person name="Reese M.G."/>
            <person name="Reinert K."/>
            <person name="Remington K."/>
            <person name="Saunders R.D.C."/>
            <person name="Scheeler F."/>
            <person name="Shen H."/>
            <person name="Shue B.C."/>
            <person name="Siden-Kiamos I."/>
            <person name="Simpson M."/>
            <person name="Skupski M.P."/>
            <person name="Smith T.J."/>
            <person name="Spier E."/>
            <person name="Spradling A.C."/>
            <person name="Stapleton M."/>
            <person name="Strong R."/>
            <person name="Sun E."/>
            <person name="Svirskas R."/>
            <person name="Tector C."/>
            <person name="Turner R."/>
            <person name="Venter E."/>
            <person name="Wang A.H."/>
            <person name="Wang X."/>
            <person name="Wang Z.-Y."/>
            <person name="Wassarman D.A."/>
            <person name="Weinstock G.M."/>
            <person name="Weissenbach J."/>
            <person name="Williams S.M."/>
            <person name="Woodage T."/>
            <person name="Worley K.C."/>
            <person name="Wu D."/>
            <person name="Yang S."/>
            <person name="Yao Q.A."/>
            <person name="Ye J."/>
            <person name="Yeh R.-F."/>
            <person name="Zaveri J.S."/>
            <person name="Zhan M."/>
            <person name="Zhang G."/>
            <person name="Zhao Q."/>
            <person name="Zheng L."/>
            <person name="Zheng X.H."/>
            <person name="Zhong F.N."/>
            <person name="Zhong W."/>
            <person name="Zhou X."/>
            <person name="Zhu S.C."/>
            <person name="Zhu X."/>
            <person name="Smith H.O."/>
            <person name="Gibbs R.A."/>
            <person name="Myers E.W."/>
            <person name="Rubin G.M."/>
            <person name="Venter J.C."/>
        </authorList>
    </citation>
    <scope>NUCLEOTIDE SEQUENCE [LARGE SCALE GENOMIC DNA]</scope>
    <source>
        <strain evidence="6">Berkeley</strain>
    </source>
</reference>
<reference key="4">
    <citation type="journal article" date="2002" name="Genome Biol.">
        <title>Annotation of the Drosophila melanogaster euchromatic genome: a systematic review.</title>
        <authorList>
            <person name="Misra S."/>
            <person name="Crosby M.A."/>
            <person name="Mungall C.J."/>
            <person name="Matthews B.B."/>
            <person name="Campbell K.S."/>
            <person name="Hradecky P."/>
            <person name="Huang Y."/>
            <person name="Kaminker J.S."/>
            <person name="Millburn G.H."/>
            <person name="Prochnik S.E."/>
            <person name="Smith C.D."/>
            <person name="Tupy J.L."/>
            <person name="Whitfield E.J."/>
            <person name="Bayraktaroglu L."/>
            <person name="Berman B.P."/>
            <person name="Bettencourt B.R."/>
            <person name="Celniker S.E."/>
            <person name="de Grey A.D.N.J."/>
            <person name="Drysdale R.A."/>
            <person name="Harris N.L."/>
            <person name="Richter J."/>
            <person name="Russo S."/>
            <person name="Schroeder A.J."/>
            <person name="Shu S.Q."/>
            <person name="Stapleton M."/>
            <person name="Yamada C."/>
            <person name="Ashburner M."/>
            <person name="Gelbart W.M."/>
            <person name="Rubin G.M."/>
            <person name="Lewis S.E."/>
        </authorList>
    </citation>
    <scope>GENOME REANNOTATION</scope>
    <source>
        <strain>Berkeley</strain>
    </source>
</reference>
<reference evidence="9" key="5">
    <citation type="submission" date="2003-08" db="EMBL/GenBank/DDBJ databases">
        <authorList>
            <person name="Stapleton M."/>
            <person name="Brokstein P."/>
            <person name="Hong L."/>
            <person name="Agbayani A."/>
            <person name="Carlson J.W."/>
            <person name="Champe M."/>
            <person name="Chavez C."/>
            <person name="Dorsett V."/>
            <person name="Dresnek D."/>
            <person name="Farfan D.E."/>
            <person name="Frise E."/>
            <person name="George R.A."/>
            <person name="Gonzalez M."/>
            <person name="Guarin H."/>
            <person name="Kronmiller B."/>
            <person name="Li P.W."/>
            <person name="Liao G."/>
            <person name="Miranda A."/>
            <person name="Mungall C.J."/>
            <person name="Nunoo J."/>
            <person name="Pacleb J.M."/>
            <person name="Paragas V."/>
            <person name="Park S."/>
            <person name="Patel S."/>
            <person name="Phouanenavong S."/>
            <person name="Wan K.H."/>
            <person name="Yu C."/>
            <person name="Lewis S.E."/>
            <person name="Rubin G.M."/>
            <person name="Celniker S.E."/>
        </authorList>
    </citation>
    <scope>NUCLEOTIDE SEQUENCE [LARGE SCALE MRNA]</scope>
    <source>
        <strain evidence="9">Berkeley</strain>
        <tissue evidence="9">Embryo</tissue>
    </source>
</reference>
<reference key="6">
    <citation type="journal article" date="2002" name="Genome Biol.">
        <title>A Drosophila full-length cDNA resource.</title>
        <authorList>
            <person name="Stapleton M."/>
            <person name="Carlson J.W."/>
            <person name="Brokstein P."/>
            <person name="Yu C."/>
            <person name="Champe M."/>
            <person name="George R.A."/>
            <person name="Guarin H."/>
            <person name="Kronmiller B."/>
            <person name="Pacleb J.M."/>
            <person name="Park S."/>
            <person name="Wan K.H."/>
            <person name="Rubin G.M."/>
            <person name="Celniker S.E."/>
        </authorList>
    </citation>
    <scope>NUCLEOTIDE SEQUENCE [LARGE SCALE MRNA] OF 381-722</scope>
    <source>
        <strain>Berkeley</strain>
        <tissue>Head</tissue>
    </source>
</reference>
<reference key="7">
    <citation type="journal article" date="2008" name="J. Proteome Res.">
        <title>Phosphoproteome analysis of Drosophila melanogaster embryos.</title>
        <authorList>
            <person name="Zhai B."/>
            <person name="Villen J."/>
            <person name="Beausoleil S.A."/>
            <person name="Mintseris J."/>
            <person name="Gygi S.P."/>
        </authorList>
    </citation>
    <scope>PHOSPHORYLATION [LARGE SCALE ANALYSIS] AT SER-25</scope>
    <scope>IDENTIFICATION BY MASS SPECTROMETRY</scope>
    <source>
        <tissue>Embryo</tissue>
    </source>
</reference>
<protein>
    <recommendedName>
        <fullName>Dual specificity tyrosine-phosphorylation-regulated kinase 2</fullName>
        <ecNumber evidence="7">2.7.12.1</ecNumber>
    </recommendedName>
    <alternativeName>
        <fullName>Protein smell impaired at 35A</fullName>
    </alternativeName>
    <alternativeName>
        <fullName>dDyrk2</fullName>
    </alternativeName>
</protein>
<name>DYRK2_DROME</name>
<organism evidence="10">
    <name type="scientific">Drosophila melanogaster</name>
    <name type="common">Fruit fly</name>
    <dbReference type="NCBI Taxonomy" id="7227"/>
    <lineage>
        <taxon>Eukaryota</taxon>
        <taxon>Metazoa</taxon>
        <taxon>Ecdysozoa</taxon>
        <taxon>Arthropoda</taxon>
        <taxon>Hexapoda</taxon>
        <taxon>Insecta</taxon>
        <taxon>Pterygota</taxon>
        <taxon>Neoptera</taxon>
        <taxon>Endopterygota</taxon>
        <taxon>Diptera</taxon>
        <taxon>Brachycera</taxon>
        <taxon>Muscomorpha</taxon>
        <taxon>Ephydroidea</taxon>
        <taxon>Drosophilidae</taxon>
        <taxon>Drosophila</taxon>
        <taxon>Sophophora</taxon>
    </lineage>
</organism>
<accession>Q9V3D5</accession>
<accession>A4V0P7</accession>
<accession>Q8T0L9</accession>
<keyword id="KW-0067">ATP-binding</keyword>
<keyword id="KW-0963">Cytoplasm</keyword>
<keyword id="KW-0418">Kinase</keyword>
<keyword id="KW-0460">Magnesium</keyword>
<keyword id="KW-0547">Nucleotide-binding</keyword>
<keyword id="KW-0597">Phosphoprotein</keyword>
<keyword id="KW-1185">Reference proteome</keyword>
<keyword id="KW-0723">Serine/threonine-protein kinase</keyword>
<keyword id="KW-0808">Transferase</keyword>
<keyword id="KW-0829">Tyrosine-protein kinase</keyword>